<organism>
    <name type="scientific">Bos taurus</name>
    <name type="common">Bovine</name>
    <dbReference type="NCBI Taxonomy" id="9913"/>
    <lineage>
        <taxon>Eukaryota</taxon>
        <taxon>Metazoa</taxon>
        <taxon>Chordata</taxon>
        <taxon>Craniata</taxon>
        <taxon>Vertebrata</taxon>
        <taxon>Euteleostomi</taxon>
        <taxon>Mammalia</taxon>
        <taxon>Eutheria</taxon>
        <taxon>Laurasiatheria</taxon>
        <taxon>Artiodactyla</taxon>
        <taxon>Ruminantia</taxon>
        <taxon>Pecora</taxon>
        <taxon>Bovidae</taxon>
        <taxon>Bovinae</taxon>
        <taxon>Bos</taxon>
    </lineage>
</organism>
<sequence length="229" mass="25134">MVTHSKFPAAGMSRPLDTSLRLKTFSSKSEYQLVVNAVRKLQESGFYWSTVTGGEANLLLSAEPAGTFLIRDSSDQRHFFTLSVKTQSGTKNLRIQCEGGSFSLQSDPRSTQPVPRFDCVLKLVHHYMPAAGAPSFSQPPAEPSSSPSSEVPEQPPAQPLSGNPPRRAYYIYSGGEKIPLVLSRPLSSNVATLQHLCRKTVNGHLDSYEKVTQLPGPIREFLDQYDAPL</sequence>
<evidence type="ECO:0000250" key="1"/>
<evidence type="ECO:0000250" key="2">
    <source>
        <dbReference type="UniProtKB" id="O14543"/>
    </source>
</evidence>
<evidence type="ECO:0000250" key="3">
    <source>
        <dbReference type="UniProtKB" id="O35718"/>
    </source>
</evidence>
<evidence type="ECO:0000255" key="4">
    <source>
        <dbReference type="PROSITE-ProRule" id="PRU00191"/>
    </source>
</evidence>
<evidence type="ECO:0000255" key="5">
    <source>
        <dbReference type="PROSITE-ProRule" id="PRU00194"/>
    </source>
</evidence>
<evidence type="ECO:0000256" key="6">
    <source>
        <dbReference type="SAM" id="MobiDB-lite"/>
    </source>
</evidence>
<gene>
    <name type="primary">SOCS3</name>
</gene>
<proteinExistence type="evidence at transcript level"/>
<accession>Q9BEG9</accession>
<keyword id="KW-0341">Growth regulation</keyword>
<keyword id="KW-0597">Phosphoprotein</keyword>
<keyword id="KW-1185">Reference proteome</keyword>
<keyword id="KW-0727">SH2 domain</keyword>
<keyword id="KW-0734">Signal transduction inhibitor</keyword>
<keyword id="KW-0833">Ubl conjugation pathway</keyword>
<name>SOCS3_BOVIN</name>
<dbReference type="EMBL" id="AY026859">
    <property type="protein sequence ID" value="AAK07689.1"/>
    <property type="molecule type" value="mRNA"/>
</dbReference>
<dbReference type="RefSeq" id="NP_776891.1">
    <property type="nucleotide sequence ID" value="NM_174466.2"/>
</dbReference>
<dbReference type="RefSeq" id="XP_005221196.1">
    <property type="nucleotide sequence ID" value="XM_005221139.5"/>
</dbReference>
<dbReference type="BMRB" id="Q9BEG9"/>
<dbReference type="SMR" id="Q9BEG9"/>
<dbReference type="FunCoup" id="Q9BEG9">
    <property type="interactions" value="566"/>
</dbReference>
<dbReference type="STRING" id="9913.ENSBTAP00000011106"/>
<dbReference type="PaxDb" id="9913-ENSBTAP00000011106"/>
<dbReference type="Ensembl" id="ENSBTAT00000092959.1">
    <property type="protein sequence ID" value="ENSBTAP00000097611.1"/>
    <property type="gene ID" value="ENSBTAG00000008441.4"/>
</dbReference>
<dbReference type="GeneID" id="282081"/>
<dbReference type="KEGG" id="bta:282081"/>
<dbReference type="CTD" id="9021"/>
<dbReference type="VEuPathDB" id="HostDB:ENSBTAG00000008441"/>
<dbReference type="VGNC" id="VGNC:35121">
    <property type="gene designation" value="SOCS3"/>
</dbReference>
<dbReference type="eggNOG" id="KOG4566">
    <property type="taxonomic scope" value="Eukaryota"/>
</dbReference>
<dbReference type="GeneTree" id="ENSGT00940000159620"/>
<dbReference type="HOGENOM" id="CLU_079452_3_0_1"/>
<dbReference type="InParanoid" id="Q9BEG9"/>
<dbReference type="OMA" id="KLVHYYM"/>
<dbReference type="OrthoDB" id="6426624at2759"/>
<dbReference type="TreeFam" id="TF321368"/>
<dbReference type="Reactome" id="R-BTA-1059683">
    <property type="pathway name" value="Interleukin-6 signaling"/>
</dbReference>
<dbReference type="Reactome" id="R-BTA-877300">
    <property type="pathway name" value="Interferon gamma signaling"/>
</dbReference>
<dbReference type="Reactome" id="R-BTA-877312">
    <property type="pathway name" value="Regulation of IFNG signaling"/>
</dbReference>
<dbReference type="Reactome" id="R-BTA-8849474">
    <property type="pathway name" value="PTK6 Activates STAT3"/>
</dbReference>
<dbReference type="Reactome" id="R-BTA-8951664">
    <property type="pathway name" value="Neddylation"/>
</dbReference>
<dbReference type="Reactome" id="R-BTA-909733">
    <property type="pathway name" value="Interferon alpha/beta signaling"/>
</dbReference>
<dbReference type="Reactome" id="R-BTA-9705462">
    <property type="pathway name" value="Inactivation of CSF3 (G-CSF) signaling"/>
</dbReference>
<dbReference type="Reactome" id="R-BTA-983168">
    <property type="pathway name" value="Antigen processing: Ubiquitination &amp; Proteasome degradation"/>
</dbReference>
<dbReference type="UniPathway" id="UPA00143"/>
<dbReference type="Proteomes" id="UP000009136">
    <property type="component" value="Chromosome 19"/>
</dbReference>
<dbReference type="Bgee" id="ENSBTAG00000008441">
    <property type="expression patterns" value="Expressed in intramuscular adipose tissue and 101 other cell types or tissues"/>
</dbReference>
<dbReference type="GO" id="GO:0005126">
    <property type="term" value="F:cytokine receptor binding"/>
    <property type="evidence" value="ECO:0000318"/>
    <property type="project" value="GO_Central"/>
</dbReference>
<dbReference type="GO" id="GO:0019221">
    <property type="term" value="P:cytokine-mediated signaling pathway"/>
    <property type="evidence" value="ECO:0000318"/>
    <property type="project" value="GO_Central"/>
</dbReference>
<dbReference type="GO" id="GO:0035556">
    <property type="term" value="P:intracellular signal transduction"/>
    <property type="evidence" value="ECO:0007669"/>
    <property type="project" value="InterPro"/>
</dbReference>
<dbReference type="GO" id="GO:0046426">
    <property type="term" value="P:negative regulation of receptor signaling pathway via JAK-STAT"/>
    <property type="evidence" value="ECO:0000318"/>
    <property type="project" value="GO_Central"/>
</dbReference>
<dbReference type="GO" id="GO:0016567">
    <property type="term" value="P:protein ubiquitination"/>
    <property type="evidence" value="ECO:0007669"/>
    <property type="project" value="UniProtKB-UniPathway"/>
</dbReference>
<dbReference type="CDD" id="cd10384">
    <property type="entry name" value="SH2_SOCS3"/>
    <property type="match status" value="1"/>
</dbReference>
<dbReference type="CDD" id="cd03737">
    <property type="entry name" value="SOCS_SOCS3"/>
    <property type="match status" value="1"/>
</dbReference>
<dbReference type="FunFam" id="3.30.505.10:FF:000066">
    <property type="entry name" value="suppressor of cytokine signaling 3"/>
    <property type="match status" value="1"/>
</dbReference>
<dbReference type="Gene3D" id="3.30.505.10">
    <property type="entry name" value="SH2 domain"/>
    <property type="match status" value="1"/>
</dbReference>
<dbReference type="Gene3D" id="1.10.750.20">
    <property type="entry name" value="SOCS box"/>
    <property type="match status" value="1"/>
</dbReference>
<dbReference type="InterPro" id="IPR000980">
    <property type="entry name" value="SH2"/>
</dbReference>
<dbReference type="InterPro" id="IPR036860">
    <property type="entry name" value="SH2_dom_sf"/>
</dbReference>
<dbReference type="InterPro" id="IPR035863">
    <property type="entry name" value="SOCS3_SH2"/>
</dbReference>
<dbReference type="InterPro" id="IPR028414">
    <property type="entry name" value="SOCS3_SOCS_box"/>
</dbReference>
<dbReference type="InterPro" id="IPR001496">
    <property type="entry name" value="SOCS_box"/>
</dbReference>
<dbReference type="InterPro" id="IPR036036">
    <property type="entry name" value="SOCS_box-like_dom_sf"/>
</dbReference>
<dbReference type="PANTHER" id="PTHR10155">
    <property type="entry name" value="PHOSPHATIDYLINOSITOL 3-KINASE REGULATORY SUBUNIT"/>
    <property type="match status" value="1"/>
</dbReference>
<dbReference type="PANTHER" id="PTHR10155:SF11">
    <property type="entry name" value="SUPPRESSOR OF CYTOKINE SIGNALING 3"/>
    <property type="match status" value="1"/>
</dbReference>
<dbReference type="Pfam" id="PF00017">
    <property type="entry name" value="SH2"/>
    <property type="match status" value="1"/>
</dbReference>
<dbReference type="SMART" id="SM00252">
    <property type="entry name" value="SH2"/>
    <property type="match status" value="1"/>
</dbReference>
<dbReference type="SMART" id="SM00253">
    <property type="entry name" value="SOCS"/>
    <property type="match status" value="1"/>
</dbReference>
<dbReference type="SMART" id="SM00969">
    <property type="entry name" value="SOCS_box"/>
    <property type="match status" value="1"/>
</dbReference>
<dbReference type="SUPFAM" id="SSF55550">
    <property type="entry name" value="SH2 domain"/>
    <property type="match status" value="1"/>
</dbReference>
<dbReference type="SUPFAM" id="SSF158235">
    <property type="entry name" value="SOCS box-like"/>
    <property type="match status" value="1"/>
</dbReference>
<dbReference type="PROSITE" id="PS50001">
    <property type="entry name" value="SH2"/>
    <property type="match status" value="1"/>
</dbReference>
<dbReference type="PROSITE" id="PS50225">
    <property type="entry name" value="SOCS"/>
    <property type="match status" value="1"/>
</dbReference>
<feature type="chain" id="PRO_0000181241" description="Suppressor of cytokine signaling 3">
    <location>
        <begin position="1"/>
        <end position="229"/>
    </location>
</feature>
<feature type="domain" description="SH2" evidence="4">
    <location>
        <begin position="46"/>
        <end position="142"/>
    </location>
</feature>
<feature type="domain" description="SOCS box" evidence="5">
    <location>
        <begin position="181"/>
        <end position="228"/>
    </location>
</feature>
<feature type="region of interest" description="Kinase inhibitory region (KIR)">
    <location>
        <begin position="22"/>
        <end position="33"/>
    </location>
</feature>
<feature type="region of interest" description="Extended SH2 subdomain (ESS)">
    <location>
        <begin position="34"/>
        <end position="45"/>
    </location>
</feature>
<feature type="region of interest" description="Disordered" evidence="6">
    <location>
        <begin position="132"/>
        <end position="168"/>
    </location>
</feature>
<feature type="compositionally biased region" description="Low complexity" evidence="6">
    <location>
        <begin position="133"/>
        <end position="152"/>
    </location>
</feature>
<protein>
    <recommendedName>
        <fullName>Suppressor of cytokine signaling 3</fullName>
        <shortName>SOCS-3</shortName>
    </recommendedName>
</protein>
<comment type="function">
    <text evidence="2 3">SOCS family proteins form part of a classical negative feedback system that regulates cytokine signal transduction. SOCS3 is involved in negative regulation of cytokines that signal through the JAK/STAT pathway. Inhibits cytokine signal transduction by binding to tyrosine kinase receptors including IL6ST/gp130, LIF, erythropoietin, insulin, IL12, GCSF and leptin receptors. Binding to JAK2 inhibits its kinase activity and regulates IL6 signaling. Suppresses fetal liver erythropoiesis. Regulates onset and maintenance of allergic responses mediated by T-helper type 2 cells (By similarity). Probable substrate recognition component of a SCF-like ECS (Elongin BC-CUL2/5-SOCS-box protein) E3 ubiquitin-protein ligase complex which mediates the ubiquitination and subsequent proteasomal degradation of target proteins (By similarity).</text>
</comment>
<comment type="pathway">
    <text>Protein modification; protein ubiquitination.</text>
</comment>
<comment type="subunit">
    <text evidence="2 3">Interacts with multiple activated proteins of the tyrosine kinase signaling pathway including IGF1 receptor, insulin receptor and JAK2. Binding to JAK2 is mediated through the KIR and SH2 domains to a phosphorylated tyrosine residue within the JAK2 JH1 domain. Binds specific activated tyrosine residues of the leptin, EPO, IL12, GSCF and gp130 receptors. Interaction with CSNK1E stabilizes SOCS3 protein. Component of the probable ECS(SOSC3) E3 ubiquitin-protein ligase complex which contains CUL5, RNF7/RBX2, Elongin BC complex and SOCS3. Interacts with CUL5, RNF7, ELOB and ELOC. Interacts with FGFR3. Interacts with INSR. Interacts with BCL10; this interaction may interfere with BCL10-binding with PELI2. Interacts with NOD2 (via CARD domain); the interaction promotes NOD2 degradation.</text>
</comment>
<comment type="domain">
    <text>The ESS and SH2 domains are required for JAK phosphotyrosine binding. Further interaction with the KIR domain is necessary for signal and kinase inhibition.</text>
</comment>
<comment type="domain">
    <text evidence="1">The SOCS box domain mediates the interaction with the Elongin BC complex, an adapter module in different E3 ubiquitin ligase complexes.</text>
</comment>
<comment type="PTM">
    <text evidence="1">Phosphorylated on tyrosine residues after stimulation by the cytokines, IL-2, EPO or IGF1.</text>
</comment>
<reference key="1">
    <citation type="submission" date="2001-02" db="EMBL/GenBank/DDBJ databases">
        <title>Cloning of bovine suppressor of cytokine signaling-3.</title>
        <authorList>
            <person name="Hirano A."/>
            <person name="Norimine J."/>
            <person name="Brown W.C."/>
        </authorList>
    </citation>
    <scope>NUCLEOTIDE SEQUENCE [MRNA]</scope>
</reference>